<evidence type="ECO:0000255" key="1">
    <source>
        <dbReference type="HAMAP-Rule" id="MF_01630"/>
    </source>
</evidence>
<proteinExistence type="inferred from homology"/>
<organism>
    <name type="scientific">Aliivibrio fischeri (strain ATCC 700601 / ES114)</name>
    <name type="common">Vibrio fischeri</name>
    <dbReference type="NCBI Taxonomy" id="312309"/>
    <lineage>
        <taxon>Bacteria</taxon>
        <taxon>Pseudomonadati</taxon>
        <taxon>Pseudomonadota</taxon>
        <taxon>Gammaproteobacteria</taxon>
        <taxon>Vibrionales</taxon>
        <taxon>Vibrionaceae</taxon>
        <taxon>Aliivibrio</taxon>
    </lineage>
</organism>
<dbReference type="EC" id="1.9.6.1" evidence="1"/>
<dbReference type="EMBL" id="CP000020">
    <property type="protein sequence ID" value="AAW86400.1"/>
    <property type="molecule type" value="Genomic_DNA"/>
</dbReference>
<dbReference type="RefSeq" id="WP_011262391.1">
    <property type="nucleotide sequence ID" value="NC_006840.2"/>
</dbReference>
<dbReference type="RefSeq" id="YP_205288.1">
    <property type="nucleotide sequence ID" value="NC_006840.2"/>
</dbReference>
<dbReference type="SMR" id="Q5E3J6"/>
<dbReference type="STRING" id="312309.VF_1905"/>
<dbReference type="EnsemblBacteria" id="AAW86400">
    <property type="protein sequence ID" value="AAW86400"/>
    <property type="gene ID" value="VF_1905"/>
</dbReference>
<dbReference type="GeneID" id="54164602"/>
<dbReference type="KEGG" id="vfi:VF_1905"/>
<dbReference type="PATRIC" id="fig|312309.11.peg.1932"/>
<dbReference type="eggNOG" id="COG0243">
    <property type="taxonomic scope" value="Bacteria"/>
</dbReference>
<dbReference type="HOGENOM" id="CLU_000422_13_4_6"/>
<dbReference type="OrthoDB" id="9810782at2"/>
<dbReference type="BioCyc" id="MetaCyc:MONOMER-13447"/>
<dbReference type="Proteomes" id="UP000000537">
    <property type="component" value="Chromosome I"/>
</dbReference>
<dbReference type="GO" id="GO:0016020">
    <property type="term" value="C:membrane"/>
    <property type="evidence" value="ECO:0007669"/>
    <property type="project" value="TreeGrafter"/>
</dbReference>
<dbReference type="GO" id="GO:0009325">
    <property type="term" value="C:nitrate reductase complex"/>
    <property type="evidence" value="ECO:0007669"/>
    <property type="project" value="TreeGrafter"/>
</dbReference>
<dbReference type="GO" id="GO:0042597">
    <property type="term" value="C:periplasmic space"/>
    <property type="evidence" value="ECO:0007669"/>
    <property type="project" value="UniProtKB-SubCell"/>
</dbReference>
<dbReference type="GO" id="GO:0051539">
    <property type="term" value="F:4 iron, 4 sulfur cluster binding"/>
    <property type="evidence" value="ECO:0007669"/>
    <property type="project" value="UniProtKB-KW"/>
</dbReference>
<dbReference type="GO" id="GO:0009055">
    <property type="term" value="F:electron transfer activity"/>
    <property type="evidence" value="ECO:0007669"/>
    <property type="project" value="UniProtKB-UniRule"/>
</dbReference>
<dbReference type="GO" id="GO:0005506">
    <property type="term" value="F:iron ion binding"/>
    <property type="evidence" value="ECO:0007669"/>
    <property type="project" value="UniProtKB-UniRule"/>
</dbReference>
<dbReference type="GO" id="GO:0030151">
    <property type="term" value="F:molybdenum ion binding"/>
    <property type="evidence" value="ECO:0007669"/>
    <property type="project" value="InterPro"/>
</dbReference>
<dbReference type="GO" id="GO:0043546">
    <property type="term" value="F:molybdopterin cofactor binding"/>
    <property type="evidence" value="ECO:0007669"/>
    <property type="project" value="InterPro"/>
</dbReference>
<dbReference type="GO" id="GO:0050140">
    <property type="term" value="F:nitrate reductase (cytochrome) activity"/>
    <property type="evidence" value="ECO:0007669"/>
    <property type="project" value="UniProtKB-EC"/>
</dbReference>
<dbReference type="GO" id="GO:0045333">
    <property type="term" value="P:cellular respiration"/>
    <property type="evidence" value="ECO:0007669"/>
    <property type="project" value="UniProtKB-ARBA"/>
</dbReference>
<dbReference type="GO" id="GO:0006777">
    <property type="term" value="P:Mo-molybdopterin cofactor biosynthetic process"/>
    <property type="evidence" value="ECO:0007669"/>
    <property type="project" value="UniProtKB-UniRule"/>
</dbReference>
<dbReference type="GO" id="GO:0042128">
    <property type="term" value="P:nitrate assimilation"/>
    <property type="evidence" value="ECO:0007669"/>
    <property type="project" value="UniProtKB-UniRule"/>
</dbReference>
<dbReference type="CDD" id="cd02791">
    <property type="entry name" value="MopB_CT_Nitrate-R-NapA-like"/>
    <property type="match status" value="1"/>
</dbReference>
<dbReference type="CDD" id="cd02754">
    <property type="entry name" value="MopB_Nitrate-R-NapA-like"/>
    <property type="match status" value="1"/>
</dbReference>
<dbReference type="FunFam" id="2.40.40.20:FF:000005">
    <property type="entry name" value="Periplasmic nitrate reductase"/>
    <property type="match status" value="1"/>
</dbReference>
<dbReference type="Gene3D" id="2.40.40.20">
    <property type="match status" value="1"/>
</dbReference>
<dbReference type="Gene3D" id="3.30.200.210">
    <property type="match status" value="1"/>
</dbReference>
<dbReference type="Gene3D" id="3.40.50.740">
    <property type="match status" value="1"/>
</dbReference>
<dbReference type="Gene3D" id="3.40.228.10">
    <property type="entry name" value="Dimethylsulfoxide Reductase, domain 2"/>
    <property type="match status" value="1"/>
</dbReference>
<dbReference type="HAMAP" id="MF_01630">
    <property type="entry name" value="Nitrate_reduct_NapA"/>
    <property type="match status" value="1"/>
</dbReference>
<dbReference type="InterPro" id="IPR009010">
    <property type="entry name" value="Asp_de-COase-like_dom_sf"/>
</dbReference>
<dbReference type="InterPro" id="IPR041957">
    <property type="entry name" value="CT_Nitrate-R-NapA-like"/>
</dbReference>
<dbReference type="InterPro" id="IPR006657">
    <property type="entry name" value="MoPterin_dinucl-bd_dom"/>
</dbReference>
<dbReference type="InterPro" id="IPR006656">
    <property type="entry name" value="Mopterin_OxRdtase"/>
</dbReference>
<dbReference type="InterPro" id="IPR006963">
    <property type="entry name" value="Mopterin_OxRdtase_4Fe-4S_dom"/>
</dbReference>
<dbReference type="InterPro" id="IPR027467">
    <property type="entry name" value="MopterinOxRdtase_cofactor_BS"/>
</dbReference>
<dbReference type="InterPro" id="IPR010051">
    <property type="entry name" value="Periplasm_NO3_reductase_lsu"/>
</dbReference>
<dbReference type="InterPro" id="IPR050123">
    <property type="entry name" value="Prok_molybdopt-oxidoreductase"/>
</dbReference>
<dbReference type="InterPro" id="IPR006311">
    <property type="entry name" value="TAT_signal"/>
</dbReference>
<dbReference type="NCBIfam" id="TIGR01706">
    <property type="entry name" value="NAPA"/>
    <property type="match status" value="1"/>
</dbReference>
<dbReference type="NCBIfam" id="NF010055">
    <property type="entry name" value="PRK13532.1"/>
    <property type="match status" value="1"/>
</dbReference>
<dbReference type="PANTHER" id="PTHR43105:SF11">
    <property type="entry name" value="PERIPLASMIC NITRATE REDUCTASE"/>
    <property type="match status" value="1"/>
</dbReference>
<dbReference type="PANTHER" id="PTHR43105">
    <property type="entry name" value="RESPIRATORY NITRATE REDUCTASE"/>
    <property type="match status" value="1"/>
</dbReference>
<dbReference type="Pfam" id="PF04879">
    <property type="entry name" value="Molybdop_Fe4S4"/>
    <property type="match status" value="1"/>
</dbReference>
<dbReference type="Pfam" id="PF00384">
    <property type="entry name" value="Molybdopterin"/>
    <property type="match status" value="1"/>
</dbReference>
<dbReference type="Pfam" id="PF01568">
    <property type="entry name" value="Molydop_binding"/>
    <property type="match status" value="1"/>
</dbReference>
<dbReference type="SMART" id="SM00926">
    <property type="entry name" value="Molybdop_Fe4S4"/>
    <property type="match status" value="1"/>
</dbReference>
<dbReference type="SUPFAM" id="SSF50692">
    <property type="entry name" value="ADC-like"/>
    <property type="match status" value="1"/>
</dbReference>
<dbReference type="SUPFAM" id="SSF53706">
    <property type="entry name" value="Formate dehydrogenase/DMSO reductase, domains 1-3"/>
    <property type="match status" value="1"/>
</dbReference>
<dbReference type="PROSITE" id="PS51669">
    <property type="entry name" value="4FE4S_MOW_BIS_MGD"/>
    <property type="match status" value="1"/>
</dbReference>
<dbReference type="PROSITE" id="PS00551">
    <property type="entry name" value="MOLYBDOPTERIN_PROK_1"/>
    <property type="match status" value="1"/>
</dbReference>
<dbReference type="PROSITE" id="PS51318">
    <property type="entry name" value="TAT"/>
    <property type="match status" value="1"/>
</dbReference>
<comment type="function">
    <text evidence="1">Catalytic subunit of the periplasmic nitrate reductase complex NapAB. Receives electrons from NapB and catalyzes the reduction of nitrate to nitrite.</text>
</comment>
<comment type="catalytic activity">
    <reaction evidence="1">
        <text>2 Fe(II)-[cytochrome] + nitrate + 2 H(+) = 2 Fe(III)-[cytochrome] + nitrite + H2O</text>
        <dbReference type="Rhea" id="RHEA:12909"/>
        <dbReference type="Rhea" id="RHEA-COMP:11777"/>
        <dbReference type="Rhea" id="RHEA-COMP:11778"/>
        <dbReference type="ChEBI" id="CHEBI:15377"/>
        <dbReference type="ChEBI" id="CHEBI:15378"/>
        <dbReference type="ChEBI" id="CHEBI:16301"/>
        <dbReference type="ChEBI" id="CHEBI:17632"/>
        <dbReference type="ChEBI" id="CHEBI:29033"/>
        <dbReference type="ChEBI" id="CHEBI:29034"/>
        <dbReference type="EC" id="1.9.6.1"/>
    </reaction>
</comment>
<comment type="cofactor">
    <cofactor evidence="1">
        <name>[4Fe-4S] cluster</name>
        <dbReference type="ChEBI" id="CHEBI:49883"/>
    </cofactor>
    <text evidence="1">Binds 1 [4Fe-4S] cluster.</text>
</comment>
<comment type="cofactor">
    <cofactor evidence="1">
        <name>Mo-bis(molybdopterin guanine dinucleotide)</name>
        <dbReference type="ChEBI" id="CHEBI:60539"/>
    </cofactor>
    <text evidence="1">Binds 1 molybdenum-bis(molybdopterin guanine dinucleotide) (Mo-bis-MGD) cofactor per subunit.</text>
</comment>
<comment type="subunit">
    <text evidence="1">Component of the periplasmic nitrate reductase NapAB complex composed of NapA and NapB.</text>
</comment>
<comment type="subcellular location">
    <subcellularLocation>
        <location evidence="1">Periplasm</location>
    </subcellularLocation>
</comment>
<comment type="PTM">
    <text evidence="1">Predicted to be exported by the Tat system. The position of the signal peptide cleavage has not been experimentally proven.</text>
</comment>
<comment type="similarity">
    <text evidence="1">Belongs to the prokaryotic molybdopterin-containing oxidoreductase family. NasA/NapA/NarB subfamily.</text>
</comment>
<reference key="1">
    <citation type="journal article" date="2005" name="Proc. Natl. Acad. Sci. U.S.A.">
        <title>Complete genome sequence of Vibrio fischeri: a symbiotic bacterium with pathogenic congeners.</title>
        <authorList>
            <person name="Ruby E.G."/>
            <person name="Urbanowski M."/>
            <person name="Campbell J."/>
            <person name="Dunn A."/>
            <person name="Faini M."/>
            <person name="Gunsalus R."/>
            <person name="Lostroh P."/>
            <person name="Lupp C."/>
            <person name="McCann J."/>
            <person name="Millikan D."/>
            <person name="Schaefer A."/>
            <person name="Stabb E."/>
            <person name="Stevens A."/>
            <person name="Visick K."/>
            <person name="Whistler C."/>
            <person name="Greenberg E.P."/>
        </authorList>
    </citation>
    <scope>NUCLEOTIDE SEQUENCE [LARGE SCALE GENOMIC DNA]</scope>
    <source>
        <strain>ATCC 700601 / ES114</strain>
    </source>
</reference>
<protein>
    <recommendedName>
        <fullName evidence="1">Periplasmic nitrate reductase</fullName>
        <ecNumber evidence="1">1.9.6.1</ecNumber>
    </recommendedName>
</protein>
<gene>
    <name evidence="1" type="primary">napA</name>
    <name type="ordered locus">VF_1905</name>
</gene>
<feature type="signal peptide" description="Tat-type signal" evidence="1">
    <location>
        <begin position="1"/>
        <end position="29"/>
    </location>
</feature>
<feature type="chain" id="PRO_0000046010" description="Periplasmic nitrate reductase" evidence="1">
    <location>
        <begin position="30"/>
        <end position="829"/>
    </location>
</feature>
<feature type="domain" description="4Fe-4S Mo/W bis-MGD-type" evidence="1">
    <location>
        <begin position="41"/>
        <end position="97"/>
    </location>
</feature>
<feature type="binding site" evidence="1">
    <location>
        <position position="48"/>
    </location>
    <ligand>
        <name>[4Fe-4S] cluster</name>
        <dbReference type="ChEBI" id="CHEBI:49883"/>
    </ligand>
</feature>
<feature type="binding site" evidence="1">
    <location>
        <position position="51"/>
    </location>
    <ligand>
        <name>[4Fe-4S] cluster</name>
        <dbReference type="ChEBI" id="CHEBI:49883"/>
    </ligand>
</feature>
<feature type="binding site" evidence="1">
    <location>
        <position position="55"/>
    </location>
    <ligand>
        <name>[4Fe-4S] cluster</name>
        <dbReference type="ChEBI" id="CHEBI:49883"/>
    </ligand>
</feature>
<feature type="binding site" evidence="1">
    <location>
        <position position="83"/>
    </location>
    <ligand>
        <name>[4Fe-4S] cluster</name>
        <dbReference type="ChEBI" id="CHEBI:49883"/>
    </ligand>
</feature>
<feature type="binding site" evidence="1">
    <location>
        <position position="85"/>
    </location>
    <ligand>
        <name>Mo-bis(molybdopterin guanine dinucleotide)</name>
        <dbReference type="ChEBI" id="CHEBI:60539"/>
    </ligand>
</feature>
<feature type="binding site" evidence="1">
    <location>
        <position position="152"/>
    </location>
    <ligand>
        <name>Mo-bis(molybdopterin guanine dinucleotide)</name>
        <dbReference type="ChEBI" id="CHEBI:60539"/>
    </ligand>
</feature>
<feature type="binding site" evidence="1">
    <location>
        <position position="177"/>
    </location>
    <ligand>
        <name>Mo-bis(molybdopterin guanine dinucleotide)</name>
        <dbReference type="ChEBI" id="CHEBI:60539"/>
    </ligand>
</feature>
<feature type="binding site" evidence="1">
    <location>
        <position position="181"/>
    </location>
    <ligand>
        <name>Mo-bis(molybdopterin guanine dinucleotide)</name>
        <dbReference type="ChEBI" id="CHEBI:60539"/>
    </ligand>
</feature>
<feature type="binding site" evidence="1">
    <location>
        <begin position="214"/>
        <end position="221"/>
    </location>
    <ligand>
        <name>Mo-bis(molybdopterin guanine dinucleotide)</name>
        <dbReference type="ChEBI" id="CHEBI:60539"/>
    </ligand>
</feature>
<feature type="binding site" evidence="1">
    <location>
        <begin position="245"/>
        <end position="249"/>
    </location>
    <ligand>
        <name>Mo-bis(molybdopterin guanine dinucleotide)</name>
        <dbReference type="ChEBI" id="CHEBI:60539"/>
    </ligand>
</feature>
<feature type="binding site" evidence="1">
    <location>
        <begin position="264"/>
        <end position="266"/>
    </location>
    <ligand>
        <name>Mo-bis(molybdopterin guanine dinucleotide)</name>
        <dbReference type="ChEBI" id="CHEBI:60539"/>
    </ligand>
</feature>
<feature type="binding site" evidence="1">
    <location>
        <position position="374"/>
    </location>
    <ligand>
        <name>Mo-bis(molybdopterin guanine dinucleotide)</name>
        <dbReference type="ChEBI" id="CHEBI:60539"/>
    </ligand>
</feature>
<feature type="binding site" evidence="1">
    <location>
        <position position="378"/>
    </location>
    <ligand>
        <name>Mo-bis(molybdopterin guanine dinucleotide)</name>
        <dbReference type="ChEBI" id="CHEBI:60539"/>
    </ligand>
</feature>
<feature type="binding site" evidence="1">
    <location>
        <position position="484"/>
    </location>
    <ligand>
        <name>Mo-bis(molybdopterin guanine dinucleotide)</name>
        <dbReference type="ChEBI" id="CHEBI:60539"/>
    </ligand>
</feature>
<feature type="binding site" evidence="1">
    <location>
        <begin position="510"/>
        <end position="511"/>
    </location>
    <ligand>
        <name>Mo-bis(molybdopterin guanine dinucleotide)</name>
        <dbReference type="ChEBI" id="CHEBI:60539"/>
    </ligand>
</feature>
<feature type="binding site" evidence="1">
    <location>
        <position position="533"/>
    </location>
    <ligand>
        <name>Mo-bis(molybdopterin guanine dinucleotide)</name>
        <dbReference type="ChEBI" id="CHEBI:60539"/>
    </ligand>
</feature>
<feature type="binding site" evidence="1">
    <location>
        <position position="560"/>
    </location>
    <ligand>
        <name>Mo-bis(molybdopterin guanine dinucleotide)</name>
        <dbReference type="ChEBI" id="CHEBI:60539"/>
    </ligand>
</feature>
<feature type="binding site" evidence="1">
    <location>
        <begin position="718"/>
        <end position="727"/>
    </location>
    <ligand>
        <name>Mo-bis(molybdopterin guanine dinucleotide)</name>
        <dbReference type="ChEBI" id="CHEBI:60539"/>
    </ligand>
</feature>
<feature type="binding site" evidence="1">
    <location>
        <position position="794"/>
    </location>
    <ligand>
        <name>substrate</name>
    </ligand>
</feature>
<feature type="binding site" evidence="1">
    <location>
        <position position="802"/>
    </location>
    <ligand>
        <name>Mo-bis(molybdopterin guanine dinucleotide)</name>
        <dbReference type="ChEBI" id="CHEBI:60539"/>
    </ligand>
</feature>
<feature type="binding site" evidence="1">
    <location>
        <position position="819"/>
    </location>
    <ligand>
        <name>Mo-bis(molybdopterin guanine dinucleotide)</name>
        <dbReference type="ChEBI" id="CHEBI:60539"/>
    </ligand>
</feature>
<keyword id="KW-0004">4Fe-4S</keyword>
<keyword id="KW-0249">Electron transport</keyword>
<keyword id="KW-0408">Iron</keyword>
<keyword id="KW-0411">Iron-sulfur</keyword>
<keyword id="KW-0479">Metal-binding</keyword>
<keyword id="KW-0500">Molybdenum</keyword>
<keyword id="KW-0534">Nitrate assimilation</keyword>
<keyword id="KW-0560">Oxidoreductase</keyword>
<keyword id="KW-0574">Periplasm</keyword>
<keyword id="KW-1185">Reference proteome</keyword>
<keyword id="KW-0732">Signal</keyword>
<keyword id="KW-0813">Transport</keyword>
<accession>Q5E3J6</accession>
<sequence length="829" mass="92594">MKMTRRAFVKANAAASAAAVAGVTLPASATNLIVSSDQTKIKWDKAPCRFCGTGCSVLVGTQNGRVVATQGDPEAPVNKGLNCIKGYFLSKIMYGKDRVQTPMLRMKDGQYNKDGDFAPVSWDVALDTMAEKWKAALKKHGPTGVGMFGSGQWTVMEGYAAVKLMKAGFRSNNIDPNARHCMASAVGAFMRTFGIDEPMGCYDDFENADSFVLWGSNMAEMHPVLWTRISDRRLSHPHVKVNVLSTYYHRSFELADKGYIFEPQSDLAIANFIANYIIQNNAVNWDFVNKHTNFKQATTDIGYGLRDDDPLQMEAANPNSGAMSSISFEEYKKSVAPYTAQKASEMSGVSEEDLITLAKQYADPKTKVMSLWTMGMNQHTRGVWMNSLVYNIHLLTGKIATPGNSPFSLTGQPSACGTAREVGTFSHRLPADMVVANPKHRAISEKIWKLPEGTLNGKPGAHAVVQDRMLKDGKINAYWVMCNNNMQAGPNINTERLPGYRNPENFIVCSDPYPTATAQAADLILPTAMWVEKEGAYGNAERRTQAWYQQVQAKGEAKSDLWQIMEFSKRFKVEEVWGEELVAKAPEYRGKTMYDILFKNGQVDAFPLSEAQELNDDAKAQGFYVQKGLFEEYASFGRGHGHDLAPYDTYHTVRGLRWPVVDGKETLWRFKEGSDPYAKKGSDWDFYGKPDGKALIISAPYEAPPEVPNDEFDMWLCTGRVLEHWHTGTMTRRVPELYKAVPDALCYIHPADAKKRNLRRGDEVLISNKRGEVRVRVETRGRNRPPEGLVFVPFFDARILINKLILDATDPLSKQTDFKKCPVKITKIA</sequence>
<name>NAPA_ALIF1</name>